<dbReference type="PIR" id="A01471">
    <property type="entry name" value="MTDFBS"/>
</dbReference>
<dbReference type="GO" id="GO:0005576">
    <property type="term" value="C:extracellular region"/>
    <property type="evidence" value="ECO:0007669"/>
    <property type="project" value="UniProtKB-SubCell"/>
</dbReference>
<dbReference type="GO" id="GO:0005179">
    <property type="term" value="F:hormone activity"/>
    <property type="evidence" value="ECO:0007669"/>
    <property type="project" value="UniProtKB-KW"/>
</dbReference>
<name>MLB_SQUAC</name>
<organism>
    <name type="scientific">Squalus acanthias</name>
    <name type="common">Spiny dogfish</name>
    <dbReference type="NCBI Taxonomy" id="7797"/>
    <lineage>
        <taxon>Eukaryota</taxon>
        <taxon>Metazoa</taxon>
        <taxon>Chordata</taxon>
        <taxon>Craniata</taxon>
        <taxon>Vertebrata</taxon>
        <taxon>Chondrichthyes</taxon>
        <taxon>Elasmobranchii</taxon>
        <taxon>Squalomorphii</taxon>
        <taxon>Squaliformes</taxon>
        <taxon>Squalidae</taxon>
        <taxon>Squalus</taxon>
    </lineage>
</organism>
<reference key="1">
    <citation type="journal article" date="1974" name="Biochem. J.">
        <title>Structural studies of alpha-melanocyte-stimulating hormone and a novel beta-melanocyte-stimulating hormone from the neurointermediate lobe of the pituitary of the dogfish Squalus acanthias.</title>
        <authorList>
            <person name="Bennett H.P.J."/>
            <person name="Lowry P.J."/>
            <person name="McMartin C."/>
            <person name="Scott A.P."/>
        </authorList>
    </citation>
    <scope>PROTEIN SEQUENCE</scope>
</reference>
<feature type="peptide" id="PRO_0000044290" description="Melanotropin beta">
    <location>
        <begin position="1"/>
        <end position="16"/>
    </location>
</feature>
<evidence type="ECO:0000305" key="1"/>
<comment type="subcellular location">
    <subcellularLocation>
        <location>Secreted</location>
    </subcellularLocation>
</comment>
<comment type="similarity">
    <text evidence="1">Belongs to the POMC family.</text>
</comment>
<proteinExistence type="evidence at protein level"/>
<keyword id="KW-0903">Direct protein sequencing</keyword>
<keyword id="KW-0372">Hormone</keyword>
<keyword id="KW-0964">Secreted</keyword>
<accession>P01207</accession>
<sequence>DGDDYKFGHFRWSVPL</sequence>
<protein>
    <recommendedName>
        <fullName>Melanotropin beta</fullName>
    </recommendedName>
</protein>